<proteinExistence type="evidence at protein level"/>
<gene>
    <name type="primary">ADI1</name>
    <name type="ORF">OsI_026532</name>
</gene>
<sequence>MAATALSSQVRLPMSLRVATAPAPARVSVLPASNKLGDRLRMQATYNVKLITPDGEVELQVPDDVYILDQAEEEGIDLPYSCRAGSCSSCAGKVVSGEIDQSDQSFLDDDQVAAGWVLTCHAYPKSDVVIETHKEDDLI</sequence>
<comment type="function">
    <text>Ferredoxins are iron-sulfur proteins that transfer electrons in a wide variety of metabolic reactions.</text>
</comment>
<comment type="cofactor">
    <cofactor>
        <name>[2Fe-2S] cluster</name>
        <dbReference type="ChEBI" id="CHEBI:190135"/>
    </cofactor>
    <text>Binds 1 [2Fe-2S] cluster.</text>
</comment>
<comment type="subcellular location">
    <subcellularLocation>
        <location>Plastid</location>
        <location>Chloroplast</location>
    </subcellularLocation>
</comment>
<comment type="similarity">
    <text evidence="3">Belongs to the 2Fe2S plant-type ferredoxin family.</text>
</comment>
<protein>
    <recommendedName>
        <fullName>Ferredoxin-1, chloroplastic</fullName>
    </recommendedName>
    <alternativeName>
        <fullName>Anti-disease protein 1</fullName>
    </alternativeName>
    <alternativeName>
        <fullName>Ferredoxin I</fullName>
    </alternativeName>
</protein>
<name>FER1_ORYSI</name>
<organism>
    <name type="scientific">Oryza sativa subsp. indica</name>
    <name type="common">Rice</name>
    <dbReference type="NCBI Taxonomy" id="39946"/>
    <lineage>
        <taxon>Eukaryota</taxon>
        <taxon>Viridiplantae</taxon>
        <taxon>Streptophyta</taxon>
        <taxon>Embryophyta</taxon>
        <taxon>Tracheophyta</taxon>
        <taxon>Spermatophyta</taxon>
        <taxon>Magnoliopsida</taxon>
        <taxon>Liliopsida</taxon>
        <taxon>Poales</taxon>
        <taxon>Poaceae</taxon>
        <taxon>BOP clade</taxon>
        <taxon>Oryzoideae</taxon>
        <taxon>Oryzeae</taxon>
        <taxon>Oryzinae</taxon>
        <taxon>Oryza</taxon>
        <taxon>Oryza sativa</taxon>
    </lineage>
</organism>
<reference key="1">
    <citation type="submission" date="1997-06" db="EMBL/GenBank/DDBJ databases">
        <title>Molecular cloning and characterization of ferredoxin gene from rice.</title>
        <authorList>
            <person name="Lee M.C."/>
            <person name="Kim C.S."/>
            <person name="Yi B.Y."/>
            <person name="Eun M.Y."/>
        </authorList>
    </citation>
    <scope>NUCLEOTIDE SEQUENCE [MRNA]</scope>
    <source>
        <strain>cv. Milyang 23</strain>
        <tissue>Seed</tissue>
    </source>
</reference>
<reference key="2">
    <citation type="journal article" date="2005" name="PLoS Biol.">
        <title>The genomes of Oryza sativa: a history of duplications.</title>
        <authorList>
            <person name="Yu J."/>
            <person name="Wang J."/>
            <person name="Lin W."/>
            <person name="Li S."/>
            <person name="Li H."/>
            <person name="Zhou J."/>
            <person name="Ni P."/>
            <person name="Dong W."/>
            <person name="Hu S."/>
            <person name="Zeng C."/>
            <person name="Zhang J."/>
            <person name="Zhang Y."/>
            <person name="Li R."/>
            <person name="Xu Z."/>
            <person name="Li S."/>
            <person name="Li X."/>
            <person name="Zheng H."/>
            <person name="Cong L."/>
            <person name="Lin L."/>
            <person name="Yin J."/>
            <person name="Geng J."/>
            <person name="Li G."/>
            <person name="Shi J."/>
            <person name="Liu J."/>
            <person name="Lv H."/>
            <person name="Li J."/>
            <person name="Wang J."/>
            <person name="Deng Y."/>
            <person name="Ran L."/>
            <person name="Shi X."/>
            <person name="Wang X."/>
            <person name="Wu Q."/>
            <person name="Li C."/>
            <person name="Ren X."/>
            <person name="Wang J."/>
            <person name="Wang X."/>
            <person name="Li D."/>
            <person name="Liu D."/>
            <person name="Zhang X."/>
            <person name="Ji Z."/>
            <person name="Zhao W."/>
            <person name="Sun Y."/>
            <person name="Zhang Z."/>
            <person name="Bao J."/>
            <person name="Han Y."/>
            <person name="Dong L."/>
            <person name="Ji J."/>
            <person name="Chen P."/>
            <person name="Wu S."/>
            <person name="Liu J."/>
            <person name="Xiao Y."/>
            <person name="Bu D."/>
            <person name="Tan J."/>
            <person name="Yang L."/>
            <person name="Ye C."/>
            <person name="Zhang J."/>
            <person name="Xu J."/>
            <person name="Zhou Y."/>
            <person name="Yu Y."/>
            <person name="Zhang B."/>
            <person name="Zhuang S."/>
            <person name="Wei H."/>
            <person name="Liu B."/>
            <person name="Lei M."/>
            <person name="Yu H."/>
            <person name="Li Y."/>
            <person name="Xu H."/>
            <person name="Wei S."/>
            <person name="He X."/>
            <person name="Fang L."/>
            <person name="Zhang Z."/>
            <person name="Zhang Y."/>
            <person name="Huang X."/>
            <person name="Su Z."/>
            <person name="Tong W."/>
            <person name="Li J."/>
            <person name="Tong Z."/>
            <person name="Li S."/>
            <person name="Ye J."/>
            <person name="Wang L."/>
            <person name="Fang L."/>
            <person name="Lei T."/>
            <person name="Chen C.-S."/>
            <person name="Chen H.-C."/>
            <person name="Xu Z."/>
            <person name="Li H."/>
            <person name="Huang H."/>
            <person name="Zhang F."/>
            <person name="Xu H."/>
            <person name="Li N."/>
            <person name="Zhao C."/>
            <person name="Li S."/>
            <person name="Dong L."/>
            <person name="Huang Y."/>
            <person name="Li L."/>
            <person name="Xi Y."/>
            <person name="Qi Q."/>
            <person name="Li W."/>
            <person name="Zhang B."/>
            <person name="Hu W."/>
            <person name="Zhang Y."/>
            <person name="Tian X."/>
            <person name="Jiao Y."/>
            <person name="Liang X."/>
            <person name="Jin J."/>
            <person name="Gao L."/>
            <person name="Zheng W."/>
            <person name="Hao B."/>
            <person name="Liu S.-M."/>
            <person name="Wang W."/>
            <person name="Yuan L."/>
            <person name="Cao M."/>
            <person name="McDermott J."/>
            <person name="Samudrala R."/>
            <person name="Wang J."/>
            <person name="Wong G.K.-S."/>
            <person name="Yang H."/>
        </authorList>
    </citation>
    <scope>NUCLEOTIDE SEQUENCE [LARGE SCALE GENOMIC DNA]</scope>
    <source>
        <strain>cv. 93-11</strain>
    </source>
</reference>
<reference key="3">
    <citation type="journal article" date="1989" name="Protein Seq. Data Anal.">
        <title>Amino acid sequences of ferredoxins from rice cultivars, japonica and indica.</title>
        <authorList>
            <person name="Kamo M."/>
            <person name="Kotani N."/>
            <person name="Tsugita A."/>
            <person name="He Y.-K."/>
            <person name="Nozu Y."/>
        </authorList>
    </citation>
    <scope>PROTEIN SEQUENCE OF 44-139</scope>
    <source>
        <tissue>Leaf</tissue>
    </source>
</reference>
<evidence type="ECO:0000255" key="1">
    <source>
        <dbReference type="PROSITE-ProRule" id="PRU00465"/>
    </source>
</evidence>
<evidence type="ECO:0000269" key="2">
    <source>
    </source>
</evidence>
<evidence type="ECO:0000305" key="3"/>
<accession>A2YQD9</accession>
<accession>O22382</accession>
<accession>P11051</accession>
<accession>Q40683</accession>
<accession>Q6ZJN6</accession>
<accession>Q8S9N2</accession>
<feature type="transit peptide" description="Chloroplast" evidence="2">
    <location>
        <begin position="1"/>
        <end position="43"/>
    </location>
</feature>
<feature type="chain" id="PRO_0000295022" description="Ferredoxin-1, chloroplastic">
    <location>
        <begin position="44"/>
        <end position="139"/>
    </location>
</feature>
<feature type="domain" description="2Fe-2S ferredoxin-type" evidence="1">
    <location>
        <begin position="46"/>
        <end position="136"/>
    </location>
</feature>
<feature type="binding site">
    <location>
        <position position="82"/>
    </location>
    <ligand>
        <name>[2Fe-2S] cluster</name>
        <dbReference type="ChEBI" id="CHEBI:190135"/>
    </ligand>
</feature>
<feature type="binding site">
    <location>
        <position position="87"/>
    </location>
    <ligand>
        <name>[2Fe-2S] cluster</name>
        <dbReference type="ChEBI" id="CHEBI:190135"/>
    </ligand>
</feature>
<feature type="binding site">
    <location>
        <position position="90"/>
    </location>
    <ligand>
        <name>[2Fe-2S] cluster</name>
        <dbReference type="ChEBI" id="CHEBI:190135"/>
    </ligand>
</feature>
<feature type="binding site">
    <location>
        <position position="120"/>
    </location>
    <ligand>
        <name>[2Fe-2S] cluster</name>
        <dbReference type="ChEBI" id="CHEBI:190135"/>
    </ligand>
</feature>
<feature type="sequence conflict" description="In Ref. 1; AAB65699." evidence="3" ref="1">
    <original>S</original>
    <variation>N</variation>
    <location>
        <position position="33"/>
    </location>
</feature>
<feature type="sequence conflict" description="In Ref. 1; AAB65699." evidence="3" ref="1">
    <original>D</original>
    <variation>N</variation>
    <location>
        <position position="38"/>
    </location>
</feature>
<feature type="sequence conflict" description="In Ref. 1; AAB65699." evidence="3" ref="1">
    <original>DVY</original>
    <variation>NVF</variation>
    <location>
        <begin position="64"/>
        <end position="66"/>
    </location>
</feature>
<feature type="sequence conflict" description="In Ref. 1; AAB65699." evidence="3" ref="1">
    <original>D</original>
    <variation>N</variation>
    <location>
        <position position="100"/>
    </location>
</feature>
<feature type="sequence conflict" description="In Ref. 1; AAB65699." evidence="3" ref="1">
    <original>SFLDDD</original>
    <variation>NFLHNN</variation>
    <location>
        <begin position="105"/>
        <end position="110"/>
    </location>
</feature>
<feature type="sequence conflict" description="In Ref. 1; AAB65699." evidence="3" ref="1">
    <original>Y</original>
    <variation>N</variation>
    <location>
        <position position="123"/>
    </location>
</feature>
<feature type="sequence conflict" description="In Ref. 1; AAB65699." evidence="3" ref="1">
    <original>I</original>
    <variation>T</variation>
    <location>
        <position position="139"/>
    </location>
</feature>
<keyword id="KW-0001">2Fe-2S</keyword>
<keyword id="KW-0150">Chloroplast</keyword>
<keyword id="KW-0903">Direct protein sequencing</keyword>
<keyword id="KW-0249">Electron transport</keyword>
<keyword id="KW-0408">Iron</keyword>
<keyword id="KW-0411">Iron-sulfur</keyword>
<keyword id="KW-0479">Metal-binding</keyword>
<keyword id="KW-0934">Plastid</keyword>
<keyword id="KW-1185">Reference proteome</keyword>
<keyword id="KW-0809">Transit peptide</keyword>
<keyword id="KW-0813">Transport</keyword>
<dbReference type="EMBL" id="AF010320">
    <property type="protein sequence ID" value="AAB65699.1"/>
    <property type="molecule type" value="mRNA"/>
</dbReference>
<dbReference type="EMBL" id="CM000133">
    <property type="protein sequence ID" value="EAZ05300.1"/>
    <property type="molecule type" value="Genomic_DNA"/>
</dbReference>
<dbReference type="SMR" id="A2YQD9"/>
<dbReference type="STRING" id="39946.A2YQD9"/>
<dbReference type="EnsemblPlants" id="BGIOSGA027799-TA">
    <property type="protein sequence ID" value="BGIOSGA027799-PA"/>
    <property type="gene ID" value="BGIOSGA027799"/>
</dbReference>
<dbReference type="EnsemblPlants" id="OsGoSa_08g0000340.01">
    <property type="protein sequence ID" value="OsGoSa_08g0000340.01"/>
    <property type="gene ID" value="OsGoSa_08g0000340"/>
</dbReference>
<dbReference type="EnsemblPlants" id="OsIR64_08g0000290.01">
    <property type="protein sequence ID" value="OsIR64_08g0000290.01"/>
    <property type="gene ID" value="OsIR64_08g0000290"/>
</dbReference>
<dbReference type="EnsemblPlants" id="OsKYG_08g0000330.02">
    <property type="protein sequence ID" value="OsKYG_08g0000330.02"/>
    <property type="gene ID" value="OsKYG_08g0000330"/>
</dbReference>
<dbReference type="EnsemblPlants" id="OsLaMu_08g0000340.01">
    <property type="protein sequence ID" value="OsLaMu_08g0000340.01"/>
    <property type="gene ID" value="OsLaMu_08g0000340"/>
</dbReference>
<dbReference type="EnsemblPlants" id="OsLima_08g0000400.02">
    <property type="protein sequence ID" value="OsLima_08g0000400.02"/>
    <property type="gene ID" value="OsLima_08g0000400"/>
</dbReference>
<dbReference type="EnsemblPlants" id="OsLiXu_08g0000340.01">
    <property type="protein sequence ID" value="OsLiXu_08g0000340.01"/>
    <property type="gene ID" value="OsLiXu_08g0000340"/>
</dbReference>
<dbReference type="EnsemblPlants" id="OsMH63_08G000410_02">
    <property type="protein sequence ID" value="OsMH63_08G000410_02"/>
    <property type="gene ID" value="OsMH63_08G000410"/>
</dbReference>
<dbReference type="EnsemblPlants" id="OsPr106_08g0000320.01">
    <property type="protein sequence ID" value="OsPr106_08g0000320.01"/>
    <property type="gene ID" value="OsPr106_08g0000320"/>
</dbReference>
<dbReference type="EnsemblPlants" id="OsZS97_08G000390_01">
    <property type="protein sequence ID" value="OsZS97_08G000390_01"/>
    <property type="gene ID" value="OsZS97_08G000390"/>
</dbReference>
<dbReference type="Gramene" id="BGIOSGA027799-TA">
    <property type="protein sequence ID" value="BGIOSGA027799-PA"/>
    <property type="gene ID" value="BGIOSGA027799"/>
</dbReference>
<dbReference type="Gramene" id="OsGoSa_08g0000340.01">
    <property type="protein sequence ID" value="OsGoSa_08g0000340.01"/>
    <property type="gene ID" value="OsGoSa_08g0000340"/>
</dbReference>
<dbReference type="Gramene" id="OsIR64_08g0000290.01">
    <property type="protein sequence ID" value="OsIR64_08g0000290.01"/>
    <property type="gene ID" value="OsIR64_08g0000290"/>
</dbReference>
<dbReference type="Gramene" id="OsKYG_08g0000330.02">
    <property type="protein sequence ID" value="OsKYG_08g0000330.02"/>
    <property type="gene ID" value="OsKYG_08g0000330"/>
</dbReference>
<dbReference type="Gramene" id="OsLaMu_08g0000340.01">
    <property type="protein sequence ID" value="OsLaMu_08g0000340.01"/>
    <property type="gene ID" value="OsLaMu_08g0000340"/>
</dbReference>
<dbReference type="Gramene" id="OsLima_08g0000400.02">
    <property type="protein sequence ID" value="OsLima_08g0000400.02"/>
    <property type="gene ID" value="OsLima_08g0000400"/>
</dbReference>
<dbReference type="Gramene" id="OsLiXu_08g0000340.01">
    <property type="protein sequence ID" value="OsLiXu_08g0000340.01"/>
    <property type="gene ID" value="OsLiXu_08g0000340"/>
</dbReference>
<dbReference type="Gramene" id="OsMH63_08G000410_02">
    <property type="protein sequence ID" value="OsMH63_08G000410_02"/>
    <property type="gene ID" value="OsMH63_08G000410"/>
</dbReference>
<dbReference type="Gramene" id="OsPr106_08g0000320.01">
    <property type="protein sequence ID" value="OsPr106_08g0000320.01"/>
    <property type="gene ID" value="OsPr106_08g0000320"/>
</dbReference>
<dbReference type="Gramene" id="OsZS97_08G000390_01">
    <property type="protein sequence ID" value="OsZS97_08G000390_01"/>
    <property type="gene ID" value="OsZS97_08G000390"/>
</dbReference>
<dbReference type="HOGENOM" id="CLU_082632_1_1_1"/>
<dbReference type="OMA" id="CEQNIEL"/>
<dbReference type="OrthoDB" id="1885901at2759"/>
<dbReference type="Proteomes" id="UP000007015">
    <property type="component" value="Chromosome 8"/>
</dbReference>
<dbReference type="GO" id="GO:0009570">
    <property type="term" value="C:chloroplast stroma"/>
    <property type="evidence" value="ECO:0007669"/>
    <property type="project" value="TreeGrafter"/>
</dbReference>
<dbReference type="GO" id="GO:0051537">
    <property type="term" value="F:2 iron, 2 sulfur cluster binding"/>
    <property type="evidence" value="ECO:0007669"/>
    <property type="project" value="UniProtKB-KW"/>
</dbReference>
<dbReference type="GO" id="GO:0009055">
    <property type="term" value="F:electron transfer activity"/>
    <property type="evidence" value="ECO:0007669"/>
    <property type="project" value="InterPro"/>
</dbReference>
<dbReference type="GO" id="GO:0046872">
    <property type="term" value="F:metal ion binding"/>
    <property type="evidence" value="ECO:0007669"/>
    <property type="project" value="UniProtKB-KW"/>
</dbReference>
<dbReference type="GO" id="GO:0022900">
    <property type="term" value="P:electron transport chain"/>
    <property type="evidence" value="ECO:0007669"/>
    <property type="project" value="InterPro"/>
</dbReference>
<dbReference type="CDD" id="cd00207">
    <property type="entry name" value="fer2"/>
    <property type="match status" value="1"/>
</dbReference>
<dbReference type="FunFam" id="3.10.20.30:FF:000014">
    <property type="entry name" value="Ferredoxin"/>
    <property type="match status" value="1"/>
</dbReference>
<dbReference type="Gene3D" id="3.10.20.30">
    <property type="match status" value="1"/>
</dbReference>
<dbReference type="InterPro" id="IPR036010">
    <property type="entry name" value="2Fe-2S_ferredoxin-like_sf"/>
</dbReference>
<dbReference type="InterPro" id="IPR001041">
    <property type="entry name" value="2Fe-2S_ferredoxin-type"/>
</dbReference>
<dbReference type="InterPro" id="IPR006058">
    <property type="entry name" value="2Fe2S_fd_BS"/>
</dbReference>
<dbReference type="InterPro" id="IPR012675">
    <property type="entry name" value="Beta-grasp_dom_sf"/>
</dbReference>
<dbReference type="InterPro" id="IPR010241">
    <property type="entry name" value="Fd_pln"/>
</dbReference>
<dbReference type="NCBIfam" id="TIGR02008">
    <property type="entry name" value="fdx_plant"/>
    <property type="match status" value="1"/>
</dbReference>
<dbReference type="PANTHER" id="PTHR43112">
    <property type="entry name" value="FERREDOXIN"/>
    <property type="match status" value="1"/>
</dbReference>
<dbReference type="PANTHER" id="PTHR43112:SF3">
    <property type="entry name" value="FERREDOXIN-2, CHLOROPLASTIC"/>
    <property type="match status" value="1"/>
</dbReference>
<dbReference type="Pfam" id="PF00111">
    <property type="entry name" value="Fer2"/>
    <property type="match status" value="1"/>
</dbReference>
<dbReference type="SUPFAM" id="SSF54292">
    <property type="entry name" value="2Fe-2S ferredoxin-like"/>
    <property type="match status" value="1"/>
</dbReference>
<dbReference type="PROSITE" id="PS00197">
    <property type="entry name" value="2FE2S_FER_1"/>
    <property type="match status" value="1"/>
</dbReference>
<dbReference type="PROSITE" id="PS51085">
    <property type="entry name" value="2FE2S_FER_2"/>
    <property type="match status" value="1"/>
</dbReference>